<proteinExistence type="inferred from homology"/>
<organism>
    <name type="scientific">Mycoplasmopsis pulmonis (strain UAB CTIP)</name>
    <name type="common">Mycoplasma pulmonis</name>
    <dbReference type="NCBI Taxonomy" id="272635"/>
    <lineage>
        <taxon>Bacteria</taxon>
        <taxon>Bacillati</taxon>
        <taxon>Mycoplasmatota</taxon>
        <taxon>Mycoplasmoidales</taxon>
        <taxon>Metamycoplasmataceae</taxon>
        <taxon>Mycoplasmopsis</taxon>
    </lineage>
</organism>
<dbReference type="EMBL" id="AL445564">
    <property type="protein sequence ID" value="CAC13629.1"/>
    <property type="molecule type" value="Genomic_DNA"/>
</dbReference>
<dbReference type="PIR" id="H90568">
    <property type="entry name" value="H90568"/>
</dbReference>
<dbReference type="SMR" id="Q98QB0"/>
<dbReference type="STRING" id="272635.gene:17577057"/>
<dbReference type="KEGG" id="mpu:MYPU_4560"/>
<dbReference type="eggNOG" id="COG0327">
    <property type="taxonomic scope" value="Bacteria"/>
</dbReference>
<dbReference type="HOGENOM" id="CLU_037423_2_1_14"/>
<dbReference type="Proteomes" id="UP000000528">
    <property type="component" value="Chromosome"/>
</dbReference>
<dbReference type="GO" id="GO:0005737">
    <property type="term" value="C:cytoplasm"/>
    <property type="evidence" value="ECO:0007669"/>
    <property type="project" value="TreeGrafter"/>
</dbReference>
<dbReference type="GO" id="GO:0046872">
    <property type="term" value="F:metal ion binding"/>
    <property type="evidence" value="ECO:0007669"/>
    <property type="project" value="UniProtKB-KW"/>
</dbReference>
<dbReference type="FunFam" id="3.40.1390.30:FF:000001">
    <property type="entry name" value="GTP cyclohydrolase 1 type 2"/>
    <property type="match status" value="1"/>
</dbReference>
<dbReference type="Gene3D" id="3.40.1390.30">
    <property type="entry name" value="NIF3 (NGG1p interacting factor 3)-like"/>
    <property type="match status" value="1"/>
</dbReference>
<dbReference type="InterPro" id="IPR002678">
    <property type="entry name" value="DUF34/NIF3"/>
</dbReference>
<dbReference type="InterPro" id="IPR036069">
    <property type="entry name" value="DUF34/NIF3_sf"/>
</dbReference>
<dbReference type="PANTHER" id="PTHR13799:SF14">
    <property type="entry name" value="GTP CYCLOHYDROLASE 1 TYPE 2 HOMOLOG"/>
    <property type="match status" value="1"/>
</dbReference>
<dbReference type="PANTHER" id="PTHR13799">
    <property type="entry name" value="NGG1 INTERACTING FACTOR 3"/>
    <property type="match status" value="1"/>
</dbReference>
<dbReference type="Pfam" id="PF01784">
    <property type="entry name" value="DUF34_NIF3"/>
    <property type="match status" value="1"/>
</dbReference>
<dbReference type="SUPFAM" id="SSF102705">
    <property type="entry name" value="NIF3 (NGG1p interacting factor 3)-like"/>
    <property type="match status" value="1"/>
</dbReference>
<comment type="subunit">
    <text evidence="1">Homohexamer.</text>
</comment>
<comment type="similarity">
    <text evidence="2">Belongs to the GTP cyclohydrolase I type 2/NIF3 family.</text>
</comment>
<protein>
    <recommendedName>
        <fullName>GTP cyclohydrolase 1 type 2 homolog</fullName>
    </recommendedName>
</protein>
<gene>
    <name type="ordered locus">MYPU_4560</name>
</gene>
<name>GCH1L_MYCPU</name>
<evidence type="ECO:0000250" key="1">
    <source>
        <dbReference type="UniProtKB" id="P0AFP6"/>
    </source>
</evidence>
<evidence type="ECO:0000305" key="2"/>
<feature type="chain" id="PRO_0000147316" description="GTP cyclohydrolase 1 type 2 homolog">
    <location>
        <begin position="1"/>
        <end position="251"/>
    </location>
</feature>
<feature type="binding site" evidence="1">
    <location>
        <position position="62"/>
    </location>
    <ligand>
        <name>a divalent metal cation</name>
        <dbReference type="ChEBI" id="CHEBI:60240"/>
        <label>1</label>
    </ligand>
</feature>
<feature type="binding site" evidence="1">
    <location>
        <position position="63"/>
    </location>
    <ligand>
        <name>a divalent metal cation</name>
        <dbReference type="ChEBI" id="CHEBI:60240"/>
        <label>2</label>
    </ligand>
</feature>
<feature type="binding site" evidence="1">
    <location>
        <position position="103"/>
    </location>
    <ligand>
        <name>a divalent metal cation</name>
        <dbReference type="ChEBI" id="CHEBI:60240"/>
        <label>1</label>
    </ligand>
</feature>
<feature type="binding site" evidence="1">
    <location>
        <position position="215"/>
    </location>
    <ligand>
        <name>a divalent metal cation</name>
        <dbReference type="ChEBI" id="CHEBI:60240"/>
        <label>2</label>
    </ligand>
</feature>
<feature type="binding site" evidence="1">
    <location>
        <position position="219"/>
    </location>
    <ligand>
        <name>a divalent metal cation</name>
        <dbReference type="ChEBI" id="CHEBI:60240"/>
        <label>1</label>
    </ligand>
</feature>
<feature type="binding site" evidence="1">
    <location>
        <position position="219"/>
    </location>
    <ligand>
        <name>a divalent metal cation</name>
        <dbReference type="ChEBI" id="CHEBI:60240"/>
        <label>2</label>
    </ligand>
</feature>
<reference key="1">
    <citation type="journal article" date="2001" name="Nucleic Acids Res.">
        <title>The complete genome sequence of the murine respiratory pathogen Mycoplasma pulmonis.</title>
        <authorList>
            <person name="Chambaud I."/>
            <person name="Heilig R."/>
            <person name="Ferris S."/>
            <person name="Barbe V."/>
            <person name="Samson D."/>
            <person name="Galisson F."/>
            <person name="Moszer I."/>
            <person name="Dybvig K."/>
            <person name="Wroblewski H."/>
            <person name="Viari A."/>
            <person name="Rocha E.P.C."/>
            <person name="Blanchard A."/>
        </authorList>
    </citation>
    <scope>NUCLEOTIDE SEQUENCE [LARGE SCALE GENOMIC DNA]</scope>
    <source>
        <strain>UAB CTIP</strain>
    </source>
</reference>
<accession>Q98QB0</accession>
<keyword id="KW-0479">Metal-binding</keyword>
<keyword id="KW-1185">Reference proteome</keyword>
<sequence>MTLLLEEKYPIENCEPWDFCGFSYKVNFYNREDLTGIVVALDLTDHVLEKAIEEKANLIITHHPFIYNNNLEEEFANFPYKEKIYNKLVKLKISVYSLHTNFDADKQGTSYWVAKEFFPDEKPSPLGKYGALIKTKIELSELKAILRKKYSGPIMTNNKKASFSFNGVAFFAGSGDSPEINEHTTKNNIIITSDTKWSDWIFLSQNKKTLVNISHQTEELFIKVIYFLLTKKFKKGVNVSTFYYKNLINSL</sequence>